<dbReference type="EC" id="3.4.21.92" evidence="1"/>
<dbReference type="EMBL" id="CP000539">
    <property type="protein sequence ID" value="ABM41441.1"/>
    <property type="molecule type" value="Genomic_DNA"/>
</dbReference>
<dbReference type="SMR" id="A1W5B6"/>
<dbReference type="STRING" id="232721.Ajs_1209"/>
<dbReference type="MEROPS" id="S14.001"/>
<dbReference type="KEGG" id="ajs:Ajs_1209"/>
<dbReference type="eggNOG" id="COG0740">
    <property type="taxonomic scope" value="Bacteria"/>
</dbReference>
<dbReference type="HOGENOM" id="CLU_058707_3_2_4"/>
<dbReference type="Proteomes" id="UP000000645">
    <property type="component" value="Chromosome"/>
</dbReference>
<dbReference type="GO" id="GO:0005737">
    <property type="term" value="C:cytoplasm"/>
    <property type="evidence" value="ECO:0007669"/>
    <property type="project" value="UniProtKB-SubCell"/>
</dbReference>
<dbReference type="GO" id="GO:0009368">
    <property type="term" value="C:endopeptidase Clp complex"/>
    <property type="evidence" value="ECO:0007669"/>
    <property type="project" value="TreeGrafter"/>
</dbReference>
<dbReference type="GO" id="GO:0004176">
    <property type="term" value="F:ATP-dependent peptidase activity"/>
    <property type="evidence" value="ECO:0007669"/>
    <property type="project" value="InterPro"/>
</dbReference>
<dbReference type="GO" id="GO:0051117">
    <property type="term" value="F:ATPase binding"/>
    <property type="evidence" value="ECO:0007669"/>
    <property type="project" value="TreeGrafter"/>
</dbReference>
<dbReference type="GO" id="GO:0004252">
    <property type="term" value="F:serine-type endopeptidase activity"/>
    <property type="evidence" value="ECO:0007669"/>
    <property type="project" value="UniProtKB-UniRule"/>
</dbReference>
<dbReference type="GO" id="GO:0006515">
    <property type="term" value="P:protein quality control for misfolded or incompletely synthesized proteins"/>
    <property type="evidence" value="ECO:0007669"/>
    <property type="project" value="TreeGrafter"/>
</dbReference>
<dbReference type="CDD" id="cd07017">
    <property type="entry name" value="S14_ClpP_2"/>
    <property type="match status" value="1"/>
</dbReference>
<dbReference type="FunFam" id="3.90.226.10:FF:000001">
    <property type="entry name" value="ATP-dependent Clp protease proteolytic subunit"/>
    <property type="match status" value="1"/>
</dbReference>
<dbReference type="Gene3D" id="3.90.226.10">
    <property type="entry name" value="2-enoyl-CoA Hydratase, Chain A, domain 1"/>
    <property type="match status" value="1"/>
</dbReference>
<dbReference type="HAMAP" id="MF_00444">
    <property type="entry name" value="ClpP"/>
    <property type="match status" value="1"/>
</dbReference>
<dbReference type="InterPro" id="IPR001907">
    <property type="entry name" value="ClpP"/>
</dbReference>
<dbReference type="InterPro" id="IPR029045">
    <property type="entry name" value="ClpP/crotonase-like_dom_sf"/>
</dbReference>
<dbReference type="InterPro" id="IPR023562">
    <property type="entry name" value="ClpP/TepA"/>
</dbReference>
<dbReference type="NCBIfam" id="TIGR00493">
    <property type="entry name" value="clpP"/>
    <property type="match status" value="1"/>
</dbReference>
<dbReference type="NCBIfam" id="NF001368">
    <property type="entry name" value="PRK00277.1"/>
    <property type="match status" value="1"/>
</dbReference>
<dbReference type="NCBIfam" id="NF009205">
    <property type="entry name" value="PRK12553.1"/>
    <property type="match status" value="1"/>
</dbReference>
<dbReference type="PANTHER" id="PTHR10381">
    <property type="entry name" value="ATP-DEPENDENT CLP PROTEASE PROTEOLYTIC SUBUNIT"/>
    <property type="match status" value="1"/>
</dbReference>
<dbReference type="PANTHER" id="PTHR10381:SF70">
    <property type="entry name" value="ATP-DEPENDENT CLP PROTEASE PROTEOLYTIC SUBUNIT"/>
    <property type="match status" value="1"/>
</dbReference>
<dbReference type="Pfam" id="PF00574">
    <property type="entry name" value="CLP_protease"/>
    <property type="match status" value="1"/>
</dbReference>
<dbReference type="PRINTS" id="PR00127">
    <property type="entry name" value="CLPPROTEASEP"/>
</dbReference>
<dbReference type="SUPFAM" id="SSF52096">
    <property type="entry name" value="ClpP/crotonase"/>
    <property type="match status" value="1"/>
</dbReference>
<proteinExistence type="inferred from homology"/>
<gene>
    <name evidence="1" type="primary">clpP</name>
    <name type="ordered locus">Ajs_1209</name>
</gene>
<name>CLPP_ACISJ</name>
<feature type="chain" id="PRO_1000026060" description="ATP-dependent Clp protease proteolytic subunit">
    <location>
        <begin position="1"/>
        <end position="202"/>
    </location>
</feature>
<feature type="active site" description="Nucleophile" evidence="1">
    <location>
        <position position="106"/>
    </location>
</feature>
<feature type="active site" evidence="1">
    <location>
        <position position="131"/>
    </location>
</feature>
<evidence type="ECO:0000255" key="1">
    <source>
        <dbReference type="HAMAP-Rule" id="MF_00444"/>
    </source>
</evidence>
<keyword id="KW-0963">Cytoplasm</keyword>
<keyword id="KW-0378">Hydrolase</keyword>
<keyword id="KW-0645">Protease</keyword>
<keyword id="KW-0720">Serine protease</keyword>
<protein>
    <recommendedName>
        <fullName evidence="1">ATP-dependent Clp protease proteolytic subunit</fullName>
        <ecNumber evidence="1">3.4.21.92</ecNumber>
    </recommendedName>
    <alternativeName>
        <fullName evidence="1">Endopeptidase Clp</fullName>
    </alternativeName>
</protein>
<organism>
    <name type="scientific">Acidovorax sp. (strain JS42)</name>
    <dbReference type="NCBI Taxonomy" id="232721"/>
    <lineage>
        <taxon>Bacteria</taxon>
        <taxon>Pseudomonadati</taxon>
        <taxon>Pseudomonadota</taxon>
        <taxon>Betaproteobacteria</taxon>
        <taxon>Burkholderiales</taxon>
        <taxon>Comamonadaceae</taxon>
        <taxon>Acidovorax</taxon>
    </lineage>
</organism>
<reference key="1">
    <citation type="submission" date="2006-12" db="EMBL/GenBank/DDBJ databases">
        <title>Complete sequence of chromosome 1 of Acidovorax sp. JS42.</title>
        <authorList>
            <person name="Copeland A."/>
            <person name="Lucas S."/>
            <person name="Lapidus A."/>
            <person name="Barry K."/>
            <person name="Detter J.C."/>
            <person name="Glavina del Rio T."/>
            <person name="Dalin E."/>
            <person name="Tice H."/>
            <person name="Pitluck S."/>
            <person name="Chertkov O."/>
            <person name="Brettin T."/>
            <person name="Bruce D."/>
            <person name="Han C."/>
            <person name="Tapia R."/>
            <person name="Gilna P."/>
            <person name="Schmutz J."/>
            <person name="Larimer F."/>
            <person name="Land M."/>
            <person name="Hauser L."/>
            <person name="Kyrpides N."/>
            <person name="Kim E."/>
            <person name="Stahl D."/>
            <person name="Richardson P."/>
        </authorList>
    </citation>
    <scope>NUCLEOTIDE SEQUENCE [LARGE SCALE GENOMIC DNA]</scope>
    <source>
        <strain>JS42</strain>
    </source>
</reference>
<accession>A1W5B6</accession>
<sequence>MSALETQALGMIPMVIEQSGRGERSYDIYSRLLKERVIFLVGEVNDQTANLVVAQLLFLESENPDKDISFYINSPGGSVTAGMAIYDTMQFIKPDVSTLCCGFAASMGAFLLAAGAKGKRYSLPNSKIMIHQVLGGARGQATDIEIHARDILRTKEQMNRILAERTGQPIEKVKADTERDYFMTADEAKDYGIVDQVIAKRP</sequence>
<comment type="function">
    <text evidence="1">Cleaves peptides in various proteins in a process that requires ATP hydrolysis. Has a chymotrypsin-like activity. Plays a major role in the degradation of misfolded proteins.</text>
</comment>
<comment type="catalytic activity">
    <reaction evidence="1">
        <text>Hydrolysis of proteins to small peptides in the presence of ATP and magnesium. alpha-casein is the usual test substrate. In the absence of ATP, only oligopeptides shorter than five residues are hydrolyzed (such as succinyl-Leu-Tyr-|-NHMec, and Leu-Tyr-Leu-|-Tyr-Trp, in which cleavage of the -Tyr-|-Leu- and -Tyr-|-Trp bonds also occurs).</text>
        <dbReference type="EC" id="3.4.21.92"/>
    </reaction>
</comment>
<comment type="subunit">
    <text evidence="1">Fourteen ClpP subunits assemble into 2 heptameric rings which stack back to back to give a disk-like structure with a central cavity, resembling the structure of eukaryotic proteasomes.</text>
</comment>
<comment type="subcellular location">
    <subcellularLocation>
        <location evidence="1">Cytoplasm</location>
    </subcellularLocation>
</comment>
<comment type="similarity">
    <text evidence="1">Belongs to the peptidase S14 family.</text>
</comment>